<evidence type="ECO:0000250" key="1"/>
<evidence type="ECO:0000255" key="2"/>
<evidence type="ECO:0000305" key="3"/>
<dbReference type="EC" id="2.4.1.-"/>
<dbReference type="EMBL" id="AY382582">
    <property type="protein sequence ID" value="AAQ88120.1"/>
    <property type="molecule type" value="Genomic_DNA"/>
</dbReference>
<dbReference type="EMBL" id="AY138959">
    <property type="protein sequence ID" value="AAN17771.1"/>
    <property type="molecule type" value="Genomic_DNA"/>
</dbReference>
<dbReference type="RefSeq" id="WP_002484500.1">
    <property type="nucleotide sequence ID" value="NZ_WBRV01000008.1"/>
</dbReference>
<dbReference type="SMR" id="Q8GLC5"/>
<dbReference type="CAZy" id="GT2">
    <property type="family name" value="Glycosyltransferase Family 2"/>
</dbReference>
<dbReference type="PATRIC" id="fig|1282.1161.peg.589"/>
<dbReference type="OrthoDB" id="9766299at2"/>
<dbReference type="GO" id="GO:0005886">
    <property type="term" value="C:plasma membrane"/>
    <property type="evidence" value="ECO:0007669"/>
    <property type="project" value="UniProtKB-SubCell"/>
</dbReference>
<dbReference type="GO" id="GO:0008375">
    <property type="term" value="F:acetylglucosaminyltransferase activity"/>
    <property type="evidence" value="ECO:0007669"/>
    <property type="project" value="InterPro"/>
</dbReference>
<dbReference type="GO" id="GO:0043708">
    <property type="term" value="P:cell adhesion involved in biofilm formation"/>
    <property type="evidence" value="ECO:0007669"/>
    <property type="project" value="InterPro"/>
</dbReference>
<dbReference type="CDD" id="cd06423">
    <property type="entry name" value="CESA_like"/>
    <property type="match status" value="1"/>
</dbReference>
<dbReference type="Gene3D" id="3.90.550.10">
    <property type="entry name" value="Spore Coat Polysaccharide Biosynthesis Protein SpsA, Chain A"/>
    <property type="match status" value="1"/>
</dbReference>
<dbReference type="InterPro" id="IPR001173">
    <property type="entry name" value="Glyco_trans_2-like"/>
</dbReference>
<dbReference type="InterPro" id="IPR029044">
    <property type="entry name" value="Nucleotide-diphossugar_trans"/>
</dbReference>
<dbReference type="InterPro" id="IPR023853">
    <property type="entry name" value="PGA_PgaC/IcaA"/>
</dbReference>
<dbReference type="NCBIfam" id="TIGR03937">
    <property type="entry name" value="PgaC_IcaA"/>
    <property type="match status" value="1"/>
</dbReference>
<dbReference type="PANTHER" id="PTHR43630">
    <property type="entry name" value="POLY-BETA-1,6-N-ACETYL-D-GLUCOSAMINE SYNTHASE"/>
    <property type="match status" value="1"/>
</dbReference>
<dbReference type="PANTHER" id="PTHR43630:SF1">
    <property type="entry name" value="POLY-BETA-1,6-N-ACETYL-D-GLUCOSAMINE SYNTHASE"/>
    <property type="match status" value="1"/>
</dbReference>
<dbReference type="Pfam" id="PF00535">
    <property type="entry name" value="Glycos_transf_2"/>
    <property type="match status" value="1"/>
</dbReference>
<dbReference type="SUPFAM" id="SSF53448">
    <property type="entry name" value="Nucleotide-diphospho-sugar transferases"/>
    <property type="match status" value="1"/>
</dbReference>
<name>ICAA_STAEP</name>
<reference key="1">
    <citation type="submission" date="2003-09" db="EMBL/GenBank/DDBJ databases">
        <authorList>
            <person name="Li H."/>
            <person name="Wen Y."/>
        </authorList>
    </citation>
    <scope>NUCLEOTIDE SEQUENCE [GENOMIC DNA]</scope>
    <source>
        <strain>97-337</strain>
    </source>
</reference>
<reference key="2">
    <citation type="journal article" date="2004" name="J. Med. Microbiol.">
        <title>Genetic and phenotypic analysis of biofilm phenotypic variation in multiple Staphylococcus epidermidis isolates.</title>
        <authorList>
            <person name="Handke L.D."/>
            <person name="Conlon K.M."/>
            <person name="Slater S.R."/>
            <person name="Elbaruni S."/>
            <person name="Fitzpatrick F."/>
            <person name="Humphreys H."/>
            <person name="Giles W.P."/>
            <person name="Rupp M.E."/>
            <person name="Fey P.D."/>
            <person name="O'Gara J.P."/>
        </authorList>
    </citation>
    <scope>NUCLEOTIDE SEQUENCE [GENOMIC DNA]</scope>
    <source>
        <strain>SE5</strain>
    </source>
</reference>
<sequence>MHIFNFLLFYPIFMSIYWIVGSIYYFFIKEKPFNRLLLVKSEHQQVEGISFLLACYNESETVQDTLSSVLSLEYPEKEIIIINDGSSDNTAEIIYEFKKNHDFKFVDLEVNRGKANALNEGIKQASYEYVMCLDADTVIDDDAPFYMIEDFKKNPKLGAVTGNPRIRNKSSILGKIQTIEYASIIGCIKRSQSLAGAINTISGVFTLFKKSALKDVGYWDTDMITEDIAVSWKLHLFDYEIKYEPRALCWMLVPETIGGLWKQRVRWAQGGHEVLLRDFWSTIKTKKLSLYILMFEQIASITWVYIVICYLSFLVITANILDYTYLKYSFSIFFFSSFTMTFINIIQFTVALFIDSRYEKKNIVGLIFLSWYPTLYWVINAAVVIMAFPKALKRKKGGYATWSSPDRGNIQR</sequence>
<comment type="function">
    <text evidence="1">N-acetylglucosaminyltransferase that catalyzes the polymerization of single monomer units of UDP-N-acetylglucosamine to produce the linear homomer poly-beta-1,6-N-acetyl-D-glucosamine (PNAG, also referred to as PIA), a biofilm adhesin polysaccharide. Requires IcaD for full activity (By similarity).</text>
</comment>
<comment type="subcellular location">
    <subcellularLocation>
        <location evidence="1">Cell membrane</location>
        <topology evidence="1">Multi-pass membrane protein</topology>
    </subcellularLocation>
</comment>
<comment type="similarity">
    <text evidence="3">Belongs to the glycosyltransferase 2 family.</text>
</comment>
<organism>
    <name type="scientific">Staphylococcus epidermidis</name>
    <dbReference type="NCBI Taxonomy" id="1282"/>
    <lineage>
        <taxon>Bacteria</taxon>
        <taxon>Bacillati</taxon>
        <taxon>Bacillota</taxon>
        <taxon>Bacilli</taxon>
        <taxon>Bacillales</taxon>
        <taxon>Staphylococcaceae</taxon>
        <taxon>Staphylococcus</taxon>
    </lineage>
</organism>
<accession>Q8GLC5</accession>
<accession>Q6TYB3</accession>
<protein>
    <recommendedName>
        <fullName>Poly-beta-1,6-N-acetyl-D-glucosamine synthase</fullName>
        <shortName>PNAG synthase</shortName>
        <shortName>Poly-beta-1,6-GlcNAc synthase</shortName>
        <ecNumber>2.4.1.-</ecNumber>
    </recommendedName>
    <alternativeName>
        <fullName>Biofilm polysaccharide intercellular adhesin synthesis protein IcaA</fullName>
        <shortName>Biofilm PIA synthesis protein IcaA</shortName>
    </alternativeName>
    <alternativeName>
        <fullName>Intercellular adhesion protein A</fullName>
    </alternativeName>
    <alternativeName>
        <fullName>N-acetylglucosaminyltransferase IcaA</fullName>
    </alternativeName>
</protein>
<proteinExistence type="inferred from homology"/>
<gene>
    <name type="primary">icaA</name>
</gene>
<keyword id="KW-1003">Cell membrane</keyword>
<keyword id="KW-0328">Glycosyltransferase</keyword>
<keyword id="KW-0472">Membrane</keyword>
<keyword id="KW-0808">Transferase</keyword>
<keyword id="KW-0812">Transmembrane</keyword>
<keyword id="KW-1133">Transmembrane helix</keyword>
<feature type="chain" id="PRO_0000059282" description="Poly-beta-1,6-N-acetyl-D-glucosamine synthase">
    <location>
        <begin position="1"/>
        <end position="412"/>
    </location>
</feature>
<feature type="transmembrane region" description="Helical" evidence="2">
    <location>
        <begin position="7"/>
        <end position="28"/>
    </location>
</feature>
<feature type="transmembrane region" description="Helical" evidence="2">
    <location>
        <begin position="298"/>
        <end position="320"/>
    </location>
</feature>
<feature type="transmembrane region" description="Helical" evidence="2">
    <location>
        <begin position="332"/>
        <end position="354"/>
    </location>
</feature>
<feature type="transmembrane region" description="Helical" evidence="2">
    <location>
        <begin position="364"/>
        <end position="386"/>
    </location>
</feature>
<feature type="sequence variant" description="In strain: 97-337.">
    <original>V</original>
    <variation>A</variation>
    <location>
        <position position="106"/>
    </location>
</feature>